<organism>
    <name type="scientific">Thermosipho melanesiensis (strain DSM 12029 / CIP 104789 / BI429)</name>
    <dbReference type="NCBI Taxonomy" id="391009"/>
    <lineage>
        <taxon>Bacteria</taxon>
        <taxon>Thermotogati</taxon>
        <taxon>Thermotogota</taxon>
        <taxon>Thermotogae</taxon>
        <taxon>Thermotogales</taxon>
        <taxon>Fervidobacteriaceae</taxon>
        <taxon>Thermosipho</taxon>
    </lineage>
</organism>
<sequence>MAVPKQKRSRSRTHHKRAKIYKAFSVPVSVCPNCGAPKLPHRVCLNCGHYGKKQVFEVAE</sequence>
<protein>
    <recommendedName>
        <fullName evidence="1">Large ribosomal subunit protein bL32</fullName>
    </recommendedName>
    <alternativeName>
        <fullName evidence="2">50S ribosomal protein L32</fullName>
    </alternativeName>
</protein>
<gene>
    <name evidence="1" type="primary">rpmF</name>
    <name type="ordered locus">Tmel_0473</name>
</gene>
<keyword id="KW-0687">Ribonucleoprotein</keyword>
<keyword id="KW-0689">Ribosomal protein</keyword>
<name>RL32_THEM4</name>
<proteinExistence type="inferred from homology"/>
<feature type="chain" id="PRO_1000005085" description="Large ribosomal subunit protein bL32">
    <location>
        <begin position="1"/>
        <end position="60"/>
    </location>
</feature>
<reference key="1">
    <citation type="submission" date="2007-05" db="EMBL/GenBank/DDBJ databases">
        <title>Complete sequence of Thermosipho melanesiensis BI429.</title>
        <authorList>
            <consortium name="US DOE Joint Genome Institute"/>
            <person name="Copeland A."/>
            <person name="Lucas S."/>
            <person name="Lapidus A."/>
            <person name="Barry K."/>
            <person name="Glavina del Rio T."/>
            <person name="Dalin E."/>
            <person name="Tice H."/>
            <person name="Pitluck S."/>
            <person name="Chertkov O."/>
            <person name="Brettin T."/>
            <person name="Bruce D."/>
            <person name="Detter J.C."/>
            <person name="Han C."/>
            <person name="Schmutz J."/>
            <person name="Larimer F."/>
            <person name="Land M."/>
            <person name="Hauser L."/>
            <person name="Kyrpides N."/>
            <person name="Mikhailova N."/>
            <person name="Nelson K."/>
            <person name="Gogarten J.P."/>
            <person name="Noll K."/>
            <person name="Richardson P."/>
        </authorList>
    </citation>
    <scope>NUCLEOTIDE SEQUENCE [LARGE SCALE GENOMIC DNA]</scope>
    <source>
        <strain>DSM 12029 / CIP 104789 / BI429</strain>
    </source>
</reference>
<accession>A6LK89</accession>
<evidence type="ECO:0000255" key="1">
    <source>
        <dbReference type="HAMAP-Rule" id="MF_00340"/>
    </source>
</evidence>
<evidence type="ECO:0000305" key="2"/>
<comment type="similarity">
    <text evidence="1">Belongs to the bacterial ribosomal protein bL32 family.</text>
</comment>
<dbReference type="EMBL" id="CP000716">
    <property type="protein sequence ID" value="ABR30340.1"/>
    <property type="molecule type" value="Genomic_DNA"/>
</dbReference>
<dbReference type="RefSeq" id="WP_012056701.1">
    <property type="nucleotide sequence ID" value="NC_009616.1"/>
</dbReference>
<dbReference type="SMR" id="A6LK89"/>
<dbReference type="STRING" id="391009.Tmel_0473"/>
<dbReference type="KEGG" id="tme:Tmel_0473"/>
<dbReference type="eggNOG" id="COG0333">
    <property type="taxonomic scope" value="Bacteria"/>
</dbReference>
<dbReference type="HOGENOM" id="CLU_129084_1_3_0"/>
<dbReference type="OrthoDB" id="9812874at2"/>
<dbReference type="Proteomes" id="UP000001110">
    <property type="component" value="Chromosome"/>
</dbReference>
<dbReference type="GO" id="GO:0015934">
    <property type="term" value="C:large ribosomal subunit"/>
    <property type="evidence" value="ECO:0007669"/>
    <property type="project" value="InterPro"/>
</dbReference>
<dbReference type="GO" id="GO:0003735">
    <property type="term" value="F:structural constituent of ribosome"/>
    <property type="evidence" value="ECO:0007669"/>
    <property type="project" value="InterPro"/>
</dbReference>
<dbReference type="GO" id="GO:0006412">
    <property type="term" value="P:translation"/>
    <property type="evidence" value="ECO:0007669"/>
    <property type="project" value="UniProtKB-UniRule"/>
</dbReference>
<dbReference type="HAMAP" id="MF_00340">
    <property type="entry name" value="Ribosomal_bL32"/>
    <property type="match status" value="1"/>
</dbReference>
<dbReference type="InterPro" id="IPR002677">
    <property type="entry name" value="Ribosomal_bL32"/>
</dbReference>
<dbReference type="InterPro" id="IPR044957">
    <property type="entry name" value="Ribosomal_bL32_bact"/>
</dbReference>
<dbReference type="InterPro" id="IPR011332">
    <property type="entry name" value="Ribosomal_zn-bd"/>
</dbReference>
<dbReference type="NCBIfam" id="TIGR01031">
    <property type="entry name" value="rpmF_bact"/>
    <property type="match status" value="1"/>
</dbReference>
<dbReference type="PANTHER" id="PTHR35534">
    <property type="entry name" value="50S RIBOSOMAL PROTEIN L32"/>
    <property type="match status" value="1"/>
</dbReference>
<dbReference type="PANTHER" id="PTHR35534:SF1">
    <property type="entry name" value="LARGE RIBOSOMAL SUBUNIT PROTEIN BL32"/>
    <property type="match status" value="1"/>
</dbReference>
<dbReference type="Pfam" id="PF01783">
    <property type="entry name" value="Ribosomal_L32p"/>
    <property type="match status" value="1"/>
</dbReference>
<dbReference type="SUPFAM" id="SSF57829">
    <property type="entry name" value="Zn-binding ribosomal proteins"/>
    <property type="match status" value="1"/>
</dbReference>